<organism>
    <name type="scientific">Homo sapiens</name>
    <name type="common">Human</name>
    <dbReference type="NCBI Taxonomy" id="9606"/>
    <lineage>
        <taxon>Eukaryota</taxon>
        <taxon>Metazoa</taxon>
        <taxon>Chordata</taxon>
        <taxon>Craniata</taxon>
        <taxon>Vertebrata</taxon>
        <taxon>Euteleostomi</taxon>
        <taxon>Mammalia</taxon>
        <taxon>Eutheria</taxon>
        <taxon>Euarchontoglires</taxon>
        <taxon>Primates</taxon>
        <taxon>Haplorrhini</taxon>
        <taxon>Catarrhini</taxon>
        <taxon>Hominidae</taxon>
        <taxon>Homo</taxon>
    </lineage>
</organism>
<proteinExistence type="evidence at protein level"/>
<reference key="1">
    <citation type="journal article" date="2009" name="Genes Cells">
        <title>Identification and characterization of a novel Tre-2/Bub2/Cdc16 (TBC) protein that possesses Rab3A-GAP activity.</title>
        <authorList>
            <person name="Ishibashi K."/>
            <person name="Kanno E."/>
            <person name="Itoh T."/>
            <person name="Fukuda M."/>
        </authorList>
    </citation>
    <scope>NUCLEOTIDE SEQUENCE [MRNA] (ISOFORM 1)</scope>
    <source>
        <tissue>Brain</tissue>
    </source>
</reference>
<reference key="2">
    <citation type="journal article" date="2004" name="Nat. Genet.">
        <title>Complete sequencing and characterization of 21,243 full-length human cDNAs.</title>
        <authorList>
            <person name="Ota T."/>
            <person name="Suzuki Y."/>
            <person name="Nishikawa T."/>
            <person name="Otsuki T."/>
            <person name="Sugiyama T."/>
            <person name="Irie R."/>
            <person name="Wakamatsu A."/>
            <person name="Hayashi K."/>
            <person name="Sato H."/>
            <person name="Nagai K."/>
            <person name="Kimura K."/>
            <person name="Makita H."/>
            <person name="Sekine M."/>
            <person name="Obayashi M."/>
            <person name="Nishi T."/>
            <person name="Shibahara T."/>
            <person name="Tanaka T."/>
            <person name="Ishii S."/>
            <person name="Yamamoto J."/>
            <person name="Saito K."/>
            <person name="Kawai Y."/>
            <person name="Isono Y."/>
            <person name="Nakamura Y."/>
            <person name="Nagahari K."/>
            <person name="Murakami K."/>
            <person name="Yasuda T."/>
            <person name="Iwayanagi T."/>
            <person name="Wagatsuma M."/>
            <person name="Shiratori A."/>
            <person name="Sudo H."/>
            <person name="Hosoiri T."/>
            <person name="Kaku Y."/>
            <person name="Kodaira H."/>
            <person name="Kondo H."/>
            <person name="Sugawara M."/>
            <person name="Takahashi M."/>
            <person name="Kanda K."/>
            <person name="Yokoi T."/>
            <person name="Furuya T."/>
            <person name="Kikkawa E."/>
            <person name="Omura Y."/>
            <person name="Abe K."/>
            <person name="Kamihara K."/>
            <person name="Katsuta N."/>
            <person name="Sato K."/>
            <person name="Tanikawa M."/>
            <person name="Yamazaki M."/>
            <person name="Ninomiya K."/>
            <person name="Ishibashi T."/>
            <person name="Yamashita H."/>
            <person name="Murakawa K."/>
            <person name="Fujimori K."/>
            <person name="Tanai H."/>
            <person name="Kimata M."/>
            <person name="Watanabe M."/>
            <person name="Hiraoka S."/>
            <person name="Chiba Y."/>
            <person name="Ishida S."/>
            <person name="Ono Y."/>
            <person name="Takiguchi S."/>
            <person name="Watanabe S."/>
            <person name="Yosida M."/>
            <person name="Hotuta T."/>
            <person name="Kusano J."/>
            <person name="Kanehori K."/>
            <person name="Takahashi-Fujii A."/>
            <person name="Hara H."/>
            <person name="Tanase T.-O."/>
            <person name="Nomura Y."/>
            <person name="Togiya S."/>
            <person name="Komai F."/>
            <person name="Hara R."/>
            <person name="Takeuchi K."/>
            <person name="Arita M."/>
            <person name="Imose N."/>
            <person name="Musashino K."/>
            <person name="Yuuki H."/>
            <person name="Oshima A."/>
            <person name="Sasaki N."/>
            <person name="Aotsuka S."/>
            <person name="Yoshikawa Y."/>
            <person name="Matsunawa H."/>
            <person name="Ichihara T."/>
            <person name="Shiohata N."/>
            <person name="Sano S."/>
            <person name="Moriya S."/>
            <person name="Momiyama H."/>
            <person name="Satoh N."/>
            <person name="Takami S."/>
            <person name="Terashima Y."/>
            <person name="Suzuki O."/>
            <person name="Nakagawa S."/>
            <person name="Senoh A."/>
            <person name="Mizoguchi H."/>
            <person name="Goto Y."/>
            <person name="Shimizu F."/>
            <person name="Wakebe H."/>
            <person name="Hishigaki H."/>
            <person name="Watanabe T."/>
            <person name="Sugiyama A."/>
            <person name="Takemoto M."/>
            <person name="Kawakami B."/>
            <person name="Yamazaki M."/>
            <person name="Watanabe K."/>
            <person name="Kumagai A."/>
            <person name="Itakura S."/>
            <person name="Fukuzumi Y."/>
            <person name="Fujimori Y."/>
            <person name="Komiyama M."/>
            <person name="Tashiro H."/>
            <person name="Tanigami A."/>
            <person name="Fujiwara T."/>
            <person name="Ono T."/>
            <person name="Yamada K."/>
            <person name="Fujii Y."/>
            <person name="Ozaki K."/>
            <person name="Hirao M."/>
            <person name="Ohmori Y."/>
            <person name="Kawabata A."/>
            <person name="Hikiji T."/>
            <person name="Kobatake N."/>
            <person name="Inagaki H."/>
            <person name="Ikema Y."/>
            <person name="Okamoto S."/>
            <person name="Okitani R."/>
            <person name="Kawakami T."/>
            <person name="Noguchi S."/>
            <person name="Itoh T."/>
            <person name="Shigeta K."/>
            <person name="Senba T."/>
            <person name="Matsumura K."/>
            <person name="Nakajima Y."/>
            <person name="Mizuno T."/>
            <person name="Morinaga M."/>
            <person name="Sasaki M."/>
            <person name="Togashi T."/>
            <person name="Oyama M."/>
            <person name="Hata H."/>
            <person name="Watanabe M."/>
            <person name="Komatsu T."/>
            <person name="Mizushima-Sugano J."/>
            <person name="Satoh T."/>
            <person name="Shirai Y."/>
            <person name="Takahashi Y."/>
            <person name="Nakagawa K."/>
            <person name="Okumura K."/>
            <person name="Nagase T."/>
            <person name="Nomura N."/>
            <person name="Kikuchi H."/>
            <person name="Masuho Y."/>
            <person name="Yamashita R."/>
            <person name="Nakai K."/>
            <person name="Yada T."/>
            <person name="Nakamura Y."/>
            <person name="Ohara O."/>
            <person name="Isogai T."/>
            <person name="Sugano S."/>
        </authorList>
    </citation>
    <scope>NUCLEOTIDE SEQUENCE [LARGE SCALE MRNA] (ISOFORMS 1; 2 AND 3)</scope>
    <source>
        <tissue>Brain</tissue>
        <tissue>Lung</tissue>
        <tissue>Placenta</tissue>
    </source>
</reference>
<reference key="3">
    <citation type="journal article" date="2001" name="Nature">
        <title>The DNA sequence and comparative analysis of human chromosome 20.</title>
        <authorList>
            <person name="Deloukas P."/>
            <person name="Matthews L.H."/>
            <person name="Ashurst J.L."/>
            <person name="Burton J."/>
            <person name="Gilbert J.G.R."/>
            <person name="Jones M."/>
            <person name="Stavrides G."/>
            <person name="Almeida J.P."/>
            <person name="Babbage A.K."/>
            <person name="Bagguley C.L."/>
            <person name="Bailey J."/>
            <person name="Barlow K.F."/>
            <person name="Bates K.N."/>
            <person name="Beard L.M."/>
            <person name="Beare D.M."/>
            <person name="Beasley O.P."/>
            <person name="Bird C.P."/>
            <person name="Blakey S.E."/>
            <person name="Bridgeman A.M."/>
            <person name="Brown A.J."/>
            <person name="Buck D."/>
            <person name="Burrill W.D."/>
            <person name="Butler A.P."/>
            <person name="Carder C."/>
            <person name="Carter N.P."/>
            <person name="Chapman J.C."/>
            <person name="Clamp M."/>
            <person name="Clark G."/>
            <person name="Clark L.N."/>
            <person name="Clark S.Y."/>
            <person name="Clee C.M."/>
            <person name="Clegg S."/>
            <person name="Cobley V.E."/>
            <person name="Collier R.E."/>
            <person name="Connor R.E."/>
            <person name="Corby N.R."/>
            <person name="Coulson A."/>
            <person name="Coville G.J."/>
            <person name="Deadman R."/>
            <person name="Dhami P.D."/>
            <person name="Dunn M."/>
            <person name="Ellington A.G."/>
            <person name="Frankland J.A."/>
            <person name="Fraser A."/>
            <person name="French L."/>
            <person name="Garner P."/>
            <person name="Grafham D.V."/>
            <person name="Griffiths C."/>
            <person name="Griffiths M.N.D."/>
            <person name="Gwilliam R."/>
            <person name="Hall R.E."/>
            <person name="Hammond S."/>
            <person name="Harley J.L."/>
            <person name="Heath P.D."/>
            <person name="Ho S."/>
            <person name="Holden J.L."/>
            <person name="Howden P.J."/>
            <person name="Huckle E."/>
            <person name="Hunt A.R."/>
            <person name="Hunt S.E."/>
            <person name="Jekosch K."/>
            <person name="Johnson C.M."/>
            <person name="Johnson D."/>
            <person name="Kay M.P."/>
            <person name="Kimberley A.M."/>
            <person name="King A."/>
            <person name="Knights A."/>
            <person name="Laird G.K."/>
            <person name="Lawlor S."/>
            <person name="Lehvaeslaiho M.H."/>
            <person name="Leversha M.A."/>
            <person name="Lloyd C."/>
            <person name="Lloyd D.M."/>
            <person name="Lovell J.D."/>
            <person name="Marsh V.L."/>
            <person name="Martin S.L."/>
            <person name="McConnachie L.J."/>
            <person name="McLay K."/>
            <person name="McMurray A.A."/>
            <person name="Milne S.A."/>
            <person name="Mistry D."/>
            <person name="Moore M.J.F."/>
            <person name="Mullikin J.C."/>
            <person name="Nickerson T."/>
            <person name="Oliver K."/>
            <person name="Parker A."/>
            <person name="Patel R."/>
            <person name="Pearce T.A.V."/>
            <person name="Peck A.I."/>
            <person name="Phillimore B.J.C.T."/>
            <person name="Prathalingam S.R."/>
            <person name="Plumb R.W."/>
            <person name="Ramsay H."/>
            <person name="Rice C.M."/>
            <person name="Ross M.T."/>
            <person name="Scott C.E."/>
            <person name="Sehra H.K."/>
            <person name="Shownkeen R."/>
            <person name="Sims S."/>
            <person name="Skuce C.D."/>
            <person name="Smith M.L."/>
            <person name="Soderlund C."/>
            <person name="Steward C.A."/>
            <person name="Sulston J.E."/>
            <person name="Swann R.M."/>
            <person name="Sycamore N."/>
            <person name="Taylor R."/>
            <person name="Tee L."/>
            <person name="Thomas D.W."/>
            <person name="Thorpe A."/>
            <person name="Tracey A."/>
            <person name="Tromans A.C."/>
            <person name="Vaudin M."/>
            <person name="Wall M."/>
            <person name="Wallis J.M."/>
            <person name="Whitehead S.L."/>
            <person name="Whittaker P."/>
            <person name="Willey D.L."/>
            <person name="Williams L."/>
            <person name="Williams S.A."/>
            <person name="Wilming L."/>
            <person name="Wray P.W."/>
            <person name="Hubbard T."/>
            <person name="Durbin R.M."/>
            <person name="Bentley D.R."/>
            <person name="Beck S."/>
            <person name="Rogers J."/>
        </authorList>
    </citation>
    <scope>NUCLEOTIDE SEQUENCE [LARGE SCALE GENOMIC DNA]</scope>
</reference>
<reference key="4">
    <citation type="submission" date="2005-09" db="EMBL/GenBank/DDBJ databases">
        <authorList>
            <person name="Mural R.J."/>
            <person name="Istrail S."/>
            <person name="Sutton G.G."/>
            <person name="Florea L."/>
            <person name="Halpern A.L."/>
            <person name="Mobarry C.M."/>
            <person name="Lippert R."/>
            <person name="Walenz B."/>
            <person name="Shatkay H."/>
            <person name="Dew I."/>
            <person name="Miller J.R."/>
            <person name="Flanigan M.J."/>
            <person name="Edwards N.J."/>
            <person name="Bolanos R."/>
            <person name="Fasulo D."/>
            <person name="Halldorsson B.V."/>
            <person name="Hannenhalli S."/>
            <person name="Turner R."/>
            <person name="Yooseph S."/>
            <person name="Lu F."/>
            <person name="Nusskern D.R."/>
            <person name="Shue B.C."/>
            <person name="Zheng X.H."/>
            <person name="Zhong F."/>
            <person name="Delcher A.L."/>
            <person name="Huson D.H."/>
            <person name="Kravitz S.A."/>
            <person name="Mouchard L."/>
            <person name="Reinert K."/>
            <person name="Remington K.A."/>
            <person name="Clark A.G."/>
            <person name="Waterman M.S."/>
            <person name="Eichler E.E."/>
            <person name="Adams M.D."/>
            <person name="Hunkapiller M.W."/>
            <person name="Myers E.W."/>
            <person name="Venter J.C."/>
        </authorList>
    </citation>
    <scope>NUCLEOTIDE SEQUENCE [LARGE SCALE GENOMIC DNA]</scope>
</reference>
<reference key="5">
    <citation type="journal article" date="2004" name="Genome Res.">
        <title>The status, quality, and expansion of the NIH full-length cDNA project: the Mammalian Gene Collection (MGC).</title>
        <authorList>
            <consortium name="The MGC Project Team"/>
        </authorList>
    </citation>
    <scope>NUCLEOTIDE SEQUENCE [LARGE SCALE MRNA] (ISOFORM 1)</scope>
    <source>
        <tissue>Skin</tissue>
    </source>
</reference>
<reference key="6">
    <citation type="journal article" date="2007" name="J. Virol.">
        <title>A Rab-GAP TBC domain protein binds hepatitis C virus NS5A and mediates viral replication.</title>
        <authorList>
            <person name="Sklan E.H."/>
            <person name="Staschke K."/>
            <person name="Oakes T.M."/>
            <person name="Elazar M."/>
            <person name="Winters M."/>
            <person name="Aroeti B."/>
            <person name="Danieli T."/>
            <person name="Glenn J.S."/>
        </authorList>
    </citation>
    <scope>INTERACTION WITH HCV NS5A (MICROBIAL INFECTION)</scope>
</reference>
<reference key="7">
    <citation type="journal article" date="2013" name="Am. J. Hum. Genet.">
        <title>Loss-of-function mutations in TBC1D20 cause cataracts and male infertility in blind sterile mice and Warburg micro syndrome in humans.</title>
        <authorList>
            <person name="Liegel R.P."/>
            <person name="Handley M.T."/>
            <person name="Ronchetti A."/>
            <person name="Brown S."/>
            <person name="Langemeyer L."/>
            <person name="Linford A."/>
            <person name="Chang B."/>
            <person name="Morris-Rosendahl D.J."/>
            <person name="Carpanini S."/>
            <person name="Posmyk R."/>
            <person name="Harthill V."/>
            <person name="Sheridan E."/>
            <person name="Abdel-Salam G.M."/>
            <person name="Terhal P.A."/>
            <person name="Faravelli F."/>
            <person name="Accorsi P."/>
            <person name="Giordano L."/>
            <person name="Pinelli L."/>
            <person name="Hartmann B."/>
            <person name="Ebert A.D."/>
            <person name="Barr F.A."/>
            <person name="Aligianis I.A."/>
            <person name="Sidjanin D.J."/>
        </authorList>
    </citation>
    <scope>INVOLVEMENT IN WARBM4</scope>
</reference>
<reference key="8">
    <citation type="journal article" date="2014" name="J. Cell Biol.">
        <title>Rab18 and a Rab18 GEF complex are required for normal ER structure.</title>
        <authorList>
            <person name="Gerondopoulos A."/>
            <person name="Bastos R.N."/>
            <person name="Yoshimura S."/>
            <person name="Anderson R."/>
            <person name="Carpanini S."/>
            <person name="Aligianis I."/>
            <person name="Handley M.T."/>
            <person name="Barr F.A."/>
        </authorList>
    </citation>
    <scope>FUNCTION</scope>
</reference>
<reference key="9">
    <citation type="journal article" date="2015" name="Open Biol.">
        <title>Warburg Micro syndrome is caused by RAB18 deficiency or dysregulation.</title>
        <authorList>
            <person name="Handley M.T."/>
            <person name="Carpanini S.M."/>
            <person name="Mali G.R."/>
            <person name="Sidjanin D.J."/>
            <person name="Aligianis I.A."/>
            <person name="Jackson I.J."/>
            <person name="FitzPatrick D.R."/>
        </authorList>
    </citation>
    <scope>FUNCTION</scope>
</reference>
<reference key="10">
    <citation type="journal article" date="2012" name="Proc. Natl. Acad. Sci. U.S.A.">
        <title>Catalytic mechanism of a mammalian Rab.RabGAP complex in atomic detail.</title>
        <authorList>
            <person name="Gavriljuk K."/>
            <person name="Gazdag E.M."/>
            <person name="Itzen A."/>
            <person name="Kotting C."/>
            <person name="Goody R.S."/>
            <person name="Gerwert K."/>
        </authorList>
    </citation>
    <scope>X-RAY CRYSTALLOGRAPHY (2.2 ANGSTROMS) OF 14-305 ALONE AND IN COMPLEX WITH RAB1B</scope>
    <scope>FUNCTION</scope>
    <scope>MUTAGENESIS OF ARG-105 AND GLN-144</scope>
    <scope>ARGININE AND GLUTAMINE FINGERS</scope>
</reference>
<protein>
    <recommendedName>
        <fullName>TBC1 domain family member 20</fullName>
    </recommendedName>
</protein>
<comment type="function">
    <text evidence="5 7 8">GTPase-activating protein (GAP) specific for Rab1 and Rab2 small GTPase families for which it can accelerate the intrinsic GTP hydrolysis rate by more than five orders of magnitude (PubMed:23236136). Also shows GAP activity for RAB18 GTPase (PubMed:26063829). Promotes RAB18 dissociation from the endoplasmic reticulum (ER) membrane into the cytosol, probably through stimulating RAB18 GTP-hydrolysis (PubMed:26063829). Involved in maintaining endoplasmic reticulum structure (PubMed:24891604).</text>
</comment>
<comment type="subunit">
    <text evidence="4">(Microbial infection) Directly interacts with the N-terminal amphipathic helix of hepatitis C virus (HCV) NS5A.</text>
</comment>
<comment type="interaction">
    <interactant intactId="EBI-9254454">
        <id>Q96BZ9</id>
    </interactant>
    <interactant intactId="EBI-18302142">
        <id>P55056</id>
        <label>APOC4</label>
    </interactant>
    <organismsDiffer>false</organismsDiffer>
    <experiments>3</experiments>
</comment>
<comment type="interaction">
    <interactant intactId="EBI-9254454">
        <id>Q96BZ9</id>
    </interactant>
    <interactant intactId="EBI-13059134">
        <id>Q13520</id>
        <label>AQP6</label>
    </interactant>
    <organismsDiffer>false</organismsDiffer>
    <experiments>3</experiments>
</comment>
<comment type="interaction">
    <interactant intactId="EBI-9254454">
        <id>Q96BZ9</id>
    </interactant>
    <interactant intactId="EBI-3915253">
        <id>Q15125</id>
        <label>EBP</label>
    </interactant>
    <organismsDiffer>false</organismsDiffer>
    <experiments>3</experiments>
</comment>
<comment type="interaction">
    <interactant intactId="EBI-9254454">
        <id>Q96BZ9</id>
    </interactant>
    <interactant intactId="EBI-8638294">
        <id>Q9NUH8</id>
        <label>TMEM14B</label>
    </interactant>
    <organismsDiffer>false</organismsDiffer>
    <experiments>3</experiments>
</comment>
<comment type="interaction">
    <interactant intactId="EBI-9254454">
        <id>Q96BZ9</id>
    </interactant>
    <interactant intactId="EBI-8753518">
        <id>PRO_0000037576</id>
        <dbReference type="UniProtKB" id="P27958"/>
    </interactant>
    <organismsDiffer>true</organismsDiffer>
    <experiments>11</experiments>
</comment>
<comment type="subcellular location">
    <subcellularLocation>
        <location evidence="10">Membrane</location>
        <topology evidence="10">Multi-pass membrane protein</topology>
    </subcellularLocation>
</comment>
<comment type="alternative products">
    <event type="alternative splicing"/>
    <isoform>
        <id>Q96BZ9-1</id>
        <name>1</name>
        <sequence type="displayed"/>
    </isoform>
    <isoform>
        <id>Q96BZ9-2</id>
        <name>2</name>
        <sequence type="described" ref="VSP_008100 VSP_008101 VSP_008102"/>
    </isoform>
    <isoform>
        <id>Q96BZ9-3</id>
        <name>3</name>
        <sequence type="described" ref="VSP_031524"/>
    </isoform>
</comment>
<comment type="domain">
    <text evidence="5">The arginine and glutamine fingers are critical for the GTPase-activating mechanism, they pull out Rab's 'switch 2' glutamine and insert in Rab's active site.</text>
</comment>
<comment type="disease" evidence="6">
    <disease id="DI-04041">
        <name>Warburg micro syndrome 4</name>
        <acronym>WARBM4</acronym>
        <description>A form of Warburg micro syndrome, a rare syndrome characterized by microcephaly, microphthalmia, microcornia, congenital cataracts, optic atrophy, cortical dysplasia, in particular corpus callosum hypoplasia, severe intellectual disability, spastic diplegia, and hypogonadism.</description>
        <dbReference type="MIM" id="615663"/>
    </disease>
    <text>The disease is caused by variants affecting the gene represented in this entry.</text>
</comment>
<comment type="miscellaneous">
    <molecule>Isoform 2</molecule>
    <text evidence="10">May be due to intron retention.</text>
</comment>
<gene>
    <name evidence="11" type="primary">TBC1D20</name>
    <name type="synonym">C20orf140</name>
</gene>
<feature type="chain" id="PRO_0000208048" description="TBC1 domain family member 20">
    <location>
        <begin position="1"/>
        <end position="403"/>
    </location>
</feature>
<feature type="transmembrane region" description="Helical" evidence="1">
    <location>
        <begin position="238"/>
        <end position="258"/>
    </location>
</feature>
<feature type="transmembrane region" description="Helical" evidence="1">
    <location>
        <begin position="367"/>
        <end position="387"/>
    </location>
</feature>
<feature type="domain" description="Rab-GAP TBC" evidence="2">
    <location>
        <begin position="60"/>
        <end position="246"/>
    </location>
</feature>
<feature type="region of interest" description="Disordered" evidence="3">
    <location>
        <begin position="1"/>
        <end position="25"/>
    </location>
</feature>
<feature type="site" description="Arginine finger" evidence="5">
    <location>
        <position position="105"/>
    </location>
</feature>
<feature type="site" description="Glutamine finger" evidence="5">
    <location>
        <position position="144"/>
    </location>
</feature>
<feature type="splice variant" id="VSP_008100" description="In isoform 2." evidence="9">
    <location>
        <begin position="1"/>
        <end position="192"/>
    </location>
</feature>
<feature type="splice variant" id="VSP_031524" description="In isoform 3." evidence="9">
    <original>M</original>
    <variation>MPSGCYVPRSEPRLLPAPPPAGARVG</variation>
    <location>
        <position position="1"/>
    </location>
</feature>
<feature type="splice variant" id="VSP_008101" description="In isoform 2." evidence="9">
    <original>SAEVGTIFALSWLITWFGHVLSDFRHVVRLYDFFLACHPLMPIYFAAVIVLYREQEVLDCDCDMASVHHLLSQIPQDLPYETLISRAGDLFVQFPPSELAREAAAQQQAERTAASTFKDFELASAQQRPDMVLRQRFRGLLRPEDRTKDVLTKPRT</original>
    <variation>RYICVCISVCMHTHAHTPPHLKHSSQAERSFLIVLGGFVKFSPVVPVTSNLGNSVLGAFLGTVLFGGHSPSLEFTSSGERWIRYVCQGKMLRLLPQEKHKVLWDPVARRGRPTMGCFISQVPKRRNIFLQIPCDVLFLLCLVGNVFLANASFFKIF</variation>
    <location>
        <begin position="209"/>
        <end position="364"/>
    </location>
</feature>
<feature type="splice variant" id="VSP_008102" description="In isoform 2." evidence="9">
    <location>
        <begin position="365"/>
        <end position="403"/>
    </location>
</feature>
<feature type="sequence variant" id="VAR_052543" description="In dbSNP:rs36088178.">
    <original>N</original>
    <variation>S</variation>
    <location>
        <position position="79"/>
    </location>
</feature>
<feature type="mutagenesis site" description="1000-fold decrease in GAP activity." evidence="5">
    <original>R</original>
    <variation>A</variation>
    <location>
        <position position="105"/>
    </location>
</feature>
<feature type="mutagenesis site" description="1000-fold decrease in GAP activity." evidence="5">
    <original>Q</original>
    <variation>L</variation>
    <location>
        <position position="144"/>
    </location>
</feature>
<feature type="sequence conflict" description="In Ref. 2; BAC86808." evidence="10" ref="2">
    <original>E</original>
    <variation>G</variation>
    <location>
        <position position="117"/>
    </location>
</feature>
<feature type="helix" evidence="12">
    <location>
        <begin position="26"/>
        <end position="40"/>
    </location>
</feature>
<feature type="strand" evidence="12">
    <location>
        <begin position="42"/>
        <end position="44"/>
    </location>
</feature>
<feature type="helix" evidence="12">
    <location>
        <begin position="47"/>
        <end position="55"/>
    </location>
</feature>
<feature type="turn" evidence="13">
    <location>
        <begin position="57"/>
        <end position="60"/>
    </location>
</feature>
<feature type="helix" evidence="12">
    <location>
        <begin position="63"/>
        <end position="73"/>
    </location>
</feature>
<feature type="helix" evidence="12">
    <location>
        <begin position="89"/>
        <end position="92"/>
    </location>
</feature>
<feature type="helix" evidence="12">
    <location>
        <begin position="96"/>
        <end position="104"/>
    </location>
</feature>
<feature type="helix" evidence="12">
    <location>
        <begin position="105"/>
        <end position="109"/>
    </location>
</feature>
<feature type="strand" evidence="13">
    <location>
        <begin position="112"/>
        <end position="114"/>
    </location>
</feature>
<feature type="helix" evidence="12">
    <location>
        <begin position="116"/>
        <end position="136"/>
    </location>
</feature>
<feature type="helix" evidence="12">
    <location>
        <begin position="146"/>
        <end position="157"/>
    </location>
</feature>
<feature type="helix" evidence="12">
    <location>
        <begin position="159"/>
        <end position="171"/>
    </location>
</feature>
<feature type="turn" evidence="12">
    <location>
        <begin position="172"/>
        <end position="175"/>
    </location>
</feature>
<feature type="helix" evidence="12">
    <location>
        <begin position="176"/>
        <end position="178"/>
    </location>
</feature>
<feature type="strand" evidence="12">
    <location>
        <begin position="180"/>
        <end position="182"/>
    </location>
</feature>
<feature type="turn" evidence="12">
    <location>
        <begin position="184"/>
        <end position="186"/>
    </location>
</feature>
<feature type="helix" evidence="12">
    <location>
        <begin position="187"/>
        <end position="191"/>
    </location>
</feature>
<feature type="helix" evidence="12">
    <location>
        <begin position="192"/>
        <end position="199"/>
    </location>
</feature>
<feature type="helix" evidence="12">
    <location>
        <begin position="201"/>
        <end position="207"/>
    </location>
</feature>
<feature type="helix" evidence="12">
    <location>
        <begin position="215"/>
        <end position="217"/>
    </location>
</feature>
<feature type="helix" evidence="12">
    <location>
        <begin position="218"/>
        <end position="222"/>
    </location>
</feature>
<feature type="turn" evidence="12">
    <location>
        <begin position="223"/>
        <end position="228"/>
    </location>
</feature>
<feature type="helix" evidence="12">
    <location>
        <begin position="232"/>
        <end position="244"/>
    </location>
</feature>
<feature type="helix" evidence="12">
    <location>
        <begin position="249"/>
        <end position="260"/>
    </location>
</feature>
<feature type="helix" evidence="12">
    <location>
        <begin position="262"/>
        <end position="266"/>
    </location>
</feature>
<feature type="helix" evidence="12">
    <location>
        <begin position="274"/>
        <end position="280"/>
    </location>
</feature>
<feature type="helix" evidence="12">
    <location>
        <begin position="288"/>
        <end position="301"/>
    </location>
</feature>
<name>TBC20_HUMAN</name>
<evidence type="ECO:0000255" key="1"/>
<evidence type="ECO:0000255" key="2">
    <source>
        <dbReference type="PROSITE-ProRule" id="PRU00163"/>
    </source>
</evidence>
<evidence type="ECO:0000256" key="3">
    <source>
        <dbReference type="SAM" id="MobiDB-lite"/>
    </source>
</evidence>
<evidence type="ECO:0000269" key="4">
    <source>
    </source>
</evidence>
<evidence type="ECO:0000269" key="5">
    <source>
    </source>
</evidence>
<evidence type="ECO:0000269" key="6">
    <source>
    </source>
</evidence>
<evidence type="ECO:0000269" key="7">
    <source>
    </source>
</evidence>
<evidence type="ECO:0000269" key="8">
    <source>
    </source>
</evidence>
<evidence type="ECO:0000303" key="9">
    <source>
    </source>
</evidence>
<evidence type="ECO:0000305" key="10"/>
<evidence type="ECO:0000312" key="11">
    <source>
        <dbReference type="HGNC" id="HGNC:16133"/>
    </source>
</evidence>
<evidence type="ECO:0007829" key="12">
    <source>
        <dbReference type="PDB" id="4HL4"/>
    </source>
</evidence>
<evidence type="ECO:0007829" key="13">
    <source>
        <dbReference type="PDB" id="4HLQ"/>
    </source>
</evidence>
<accession>Q96BZ9</accession>
<accession>A8K6I3</accession>
<accession>B9A6M1</accession>
<accession>Q5JWQ7</accession>
<accession>Q6ZSY8</accession>
<accession>Q96NE1</accession>
<accession>Q9BYM7</accession>
<accession>Q9H140</accession>
<keyword id="KW-0002">3D-structure</keyword>
<keyword id="KW-0025">Alternative splicing</keyword>
<keyword id="KW-0343">GTPase activation</keyword>
<keyword id="KW-0945">Host-virus interaction</keyword>
<keyword id="KW-0472">Membrane</keyword>
<keyword id="KW-1267">Proteomics identification</keyword>
<keyword id="KW-1185">Reference proteome</keyword>
<keyword id="KW-0812">Transmembrane</keyword>
<keyword id="KW-1133">Transmembrane helix</keyword>
<sequence length="403" mass="45855">MALRSAQGDGPTSGHWDGGAEKADFNAKRKKKVAEIHQALNSDPTDVAALRRMAISEGGLLTDEIRRKVWPKLLNVNANDPPPISGKNLRQMSKDYQQVLLDVRRSLRRFPPGMPEEQREGLQEELIDIILLILERNPQLHYYQGYHDIVVTFLLVVGERLATSLVEKLSTHHLRDFMDPTMDNTKHILNYLMPIIDQVNPELHDFMQSAEVGTIFALSWLITWFGHVLSDFRHVVRLYDFFLACHPLMPIYFAAVIVLYREQEVLDCDCDMASVHHLLSQIPQDLPYETLISRAGDLFVQFPPSELAREAAAQQQAERTAASTFKDFELASAQQRPDMVLRQRFRGLLRPEDRTKDVLTKPRTNRFVKLAVMGLTVALGAAALAVVKSALEWAPKFQLQLFP</sequence>
<dbReference type="EMBL" id="AB449906">
    <property type="protein sequence ID" value="BAH16649.1"/>
    <property type="molecule type" value="mRNA"/>
</dbReference>
<dbReference type="EMBL" id="AK055573">
    <property type="status" value="NOT_ANNOTATED_CDS"/>
    <property type="molecule type" value="mRNA"/>
</dbReference>
<dbReference type="EMBL" id="AK127062">
    <property type="protein sequence ID" value="BAC86808.1"/>
    <property type="molecule type" value="mRNA"/>
</dbReference>
<dbReference type="EMBL" id="AK291648">
    <property type="protein sequence ID" value="BAF84337.1"/>
    <property type="molecule type" value="mRNA"/>
</dbReference>
<dbReference type="EMBL" id="AL049761">
    <property type="status" value="NOT_ANNOTATED_CDS"/>
    <property type="molecule type" value="Genomic_DNA"/>
</dbReference>
<dbReference type="EMBL" id="AL121747">
    <property type="status" value="NOT_ANNOTATED_CDS"/>
    <property type="molecule type" value="Genomic_DNA"/>
</dbReference>
<dbReference type="EMBL" id="CH471133">
    <property type="protein sequence ID" value="EAX10670.1"/>
    <property type="molecule type" value="Genomic_DNA"/>
</dbReference>
<dbReference type="EMBL" id="BC014983">
    <property type="status" value="NOT_ANNOTATED_CDS"/>
    <property type="molecule type" value="mRNA"/>
</dbReference>
<dbReference type="CCDS" id="CCDS13002.1">
    <molecule id="Q96BZ9-1"/>
</dbReference>
<dbReference type="RefSeq" id="NP_653229.1">
    <molecule id="Q96BZ9-1"/>
    <property type="nucleotide sequence ID" value="NM_144628.4"/>
</dbReference>
<dbReference type="RefSeq" id="XP_005260718.1">
    <property type="nucleotide sequence ID" value="XM_005260661.1"/>
</dbReference>
<dbReference type="PDB" id="4HL4">
    <property type="method" value="X-ray"/>
    <property type="resolution" value="2.20 A"/>
    <property type="chains" value="A=14-305"/>
</dbReference>
<dbReference type="PDB" id="4HLQ">
    <property type="method" value="X-ray"/>
    <property type="resolution" value="3.30 A"/>
    <property type="chains" value="A/C/E/G/I=1-305"/>
</dbReference>
<dbReference type="PDBsum" id="4HL4"/>
<dbReference type="PDBsum" id="4HLQ"/>
<dbReference type="SMR" id="Q96BZ9"/>
<dbReference type="BioGRID" id="126139">
    <property type="interactions" value="26"/>
</dbReference>
<dbReference type="FunCoup" id="Q96BZ9">
    <property type="interactions" value="2514"/>
</dbReference>
<dbReference type="IntAct" id="Q96BZ9">
    <property type="interactions" value="11"/>
</dbReference>
<dbReference type="MINT" id="Q96BZ9"/>
<dbReference type="STRING" id="9606.ENSP00000346139"/>
<dbReference type="GlyGen" id="Q96BZ9">
    <property type="glycosylation" value="1 site"/>
</dbReference>
<dbReference type="iPTMnet" id="Q96BZ9"/>
<dbReference type="MetOSite" id="Q96BZ9"/>
<dbReference type="PhosphoSitePlus" id="Q96BZ9"/>
<dbReference type="BioMuta" id="TBC1D20"/>
<dbReference type="DMDM" id="34395569"/>
<dbReference type="jPOST" id="Q96BZ9"/>
<dbReference type="MassIVE" id="Q96BZ9"/>
<dbReference type="PaxDb" id="9606-ENSP00000346139"/>
<dbReference type="PeptideAtlas" id="Q96BZ9"/>
<dbReference type="ProteomicsDB" id="76134">
    <molecule id="Q96BZ9-1"/>
</dbReference>
<dbReference type="ProteomicsDB" id="76136">
    <molecule id="Q96BZ9-3"/>
</dbReference>
<dbReference type="Pumba" id="Q96BZ9"/>
<dbReference type="Antibodypedia" id="22961">
    <property type="antibodies" value="105 antibodies from 19 providers"/>
</dbReference>
<dbReference type="DNASU" id="128637"/>
<dbReference type="Ensembl" id="ENST00000354200.5">
    <molecule id="Q96BZ9-1"/>
    <property type="protein sequence ID" value="ENSP00000346139.4"/>
    <property type="gene ID" value="ENSG00000125875.15"/>
</dbReference>
<dbReference type="Ensembl" id="ENST00000461304.5">
    <molecule id="Q96BZ9-1"/>
    <property type="protein sequence ID" value="ENSP00000432280.1"/>
    <property type="gene ID" value="ENSG00000125875.15"/>
</dbReference>
<dbReference type="Ensembl" id="ENST00000679741.1">
    <molecule id="Q96BZ9-1"/>
    <property type="protein sequence ID" value="ENSP00000504904.1"/>
    <property type="gene ID" value="ENSG00000125875.15"/>
</dbReference>
<dbReference type="Ensembl" id="ENST00000679944.1">
    <molecule id="Q96BZ9-1"/>
    <property type="protein sequence ID" value="ENSP00000506278.1"/>
    <property type="gene ID" value="ENSG00000125875.15"/>
</dbReference>
<dbReference type="Ensembl" id="ENST00000680106.1">
    <molecule id="Q96BZ9-1"/>
    <property type="protein sequence ID" value="ENSP00000505500.1"/>
    <property type="gene ID" value="ENSG00000125875.15"/>
</dbReference>
<dbReference type="Ensembl" id="ENST00000680284.1">
    <molecule id="Q96BZ9-1"/>
    <property type="protein sequence ID" value="ENSP00000506231.1"/>
    <property type="gene ID" value="ENSG00000125875.15"/>
</dbReference>
<dbReference type="Ensembl" id="ENST00000680792.1">
    <molecule id="Q96BZ9-1"/>
    <property type="protein sequence ID" value="ENSP00000506012.1"/>
    <property type="gene ID" value="ENSG00000125875.15"/>
</dbReference>
<dbReference type="Ensembl" id="ENST00000681539.1">
    <molecule id="Q96BZ9-1"/>
    <property type="protein sequence ID" value="ENSP00000505557.1"/>
    <property type="gene ID" value="ENSG00000125875.15"/>
</dbReference>
<dbReference type="Ensembl" id="ENST00000681636.1">
    <molecule id="Q96BZ9-1"/>
    <property type="protein sequence ID" value="ENSP00000506155.1"/>
    <property type="gene ID" value="ENSG00000125875.15"/>
</dbReference>
<dbReference type="Ensembl" id="ENST00000681742.1">
    <molecule id="Q96BZ9-1"/>
    <property type="protein sequence ID" value="ENSP00000506122.1"/>
    <property type="gene ID" value="ENSG00000125875.15"/>
</dbReference>
<dbReference type="GeneID" id="128637"/>
<dbReference type="KEGG" id="hsa:128637"/>
<dbReference type="MANE-Select" id="ENST00000354200.5">
    <property type="protein sequence ID" value="ENSP00000346139.4"/>
    <property type="RefSeq nucleotide sequence ID" value="NM_144628.4"/>
    <property type="RefSeq protein sequence ID" value="NP_653229.1"/>
</dbReference>
<dbReference type="UCSC" id="uc002wds.4">
    <molecule id="Q96BZ9-1"/>
    <property type="organism name" value="human"/>
</dbReference>
<dbReference type="AGR" id="HGNC:16133"/>
<dbReference type="CTD" id="128637"/>
<dbReference type="DisGeNET" id="128637"/>
<dbReference type="GeneCards" id="TBC1D20"/>
<dbReference type="GeneReviews" id="TBC1D20"/>
<dbReference type="HGNC" id="HGNC:16133">
    <property type="gene designation" value="TBC1D20"/>
</dbReference>
<dbReference type="HPA" id="ENSG00000125875">
    <property type="expression patterns" value="Low tissue specificity"/>
</dbReference>
<dbReference type="MalaCards" id="TBC1D20"/>
<dbReference type="MIM" id="611663">
    <property type="type" value="gene"/>
</dbReference>
<dbReference type="MIM" id="615663">
    <property type="type" value="phenotype"/>
</dbReference>
<dbReference type="neXtProt" id="NX_Q96BZ9"/>
<dbReference type="OpenTargets" id="ENSG00000125875"/>
<dbReference type="Orphanet" id="2510">
    <property type="disease" value="Micro syndrome"/>
</dbReference>
<dbReference type="PharmGKB" id="PA25683"/>
<dbReference type="VEuPathDB" id="HostDB:ENSG00000125875"/>
<dbReference type="eggNOG" id="KOG2595">
    <property type="taxonomic scope" value="Eukaryota"/>
</dbReference>
<dbReference type="GeneTree" id="ENSGT00390000014944"/>
<dbReference type="HOGENOM" id="CLU_039465_1_0_1"/>
<dbReference type="InParanoid" id="Q96BZ9"/>
<dbReference type="OMA" id="VYMFAQI"/>
<dbReference type="OrthoDB" id="206700at2759"/>
<dbReference type="PAN-GO" id="Q96BZ9">
    <property type="GO annotations" value="3 GO annotations based on evolutionary models"/>
</dbReference>
<dbReference type="PhylomeDB" id="Q96BZ9"/>
<dbReference type="TreeFam" id="TF105942"/>
<dbReference type="PathwayCommons" id="Q96BZ9"/>
<dbReference type="Reactome" id="R-HSA-204005">
    <property type="pathway name" value="COPII-mediated vesicle transport"/>
</dbReference>
<dbReference type="Reactome" id="R-HSA-8854214">
    <property type="pathway name" value="TBC/RABGAPs"/>
</dbReference>
<dbReference type="SABIO-RK" id="Q96BZ9"/>
<dbReference type="SignaLink" id="Q96BZ9"/>
<dbReference type="BioGRID-ORCS" id="128637">
    <property type="hits" value="63 hits in 1159 CRISPR screens"/>
</dbReference>
<dbReference type="ChiTaRS" id="TBC1D20">
    <property type="organism name" value="human"/>
</dbReference>
<dbReference type="EvolutionaryTrace" id="Q96BZ9"/>
<dbReference type="GenomeRNAi" id="128637"/>
<dbReference type="Pharos" id="Q96BZ9">
    <property type="development level" value="Tbio"/>
</dbReference>
<dbReference type="PRO" id="PR:Q96BZ9"/>
<dbReference type="Proteomes" id="UP000005640">
    <property type="component" value="Chromosome 20"/>
</dbReference>
<dbReference type="RNAct" id="Q96BZ9">
    <property type="molecule type" value="protein"/>
</dbReference>
<dbReference type="Bgee" id="ENSG00000125875">
    <property type="expression patterns" value="Expressed in tendon of biceps brachii and 183 other cell types or tissues"/>
</dbReference>
<dbReference type="GO" id="GO:0005783">
    <property type="term" value="C:endoplasmic reticulum"/>
    <property type="evidence" value="ECO:0000314"/>
    <property type="project" value="AgBase"/>
</dbReference>
<dbReference type="GO" id="GO:0005789">
    <property type="term" value="C:endoplasmic reticulum membrane"/>
    <property type="evidence" value="ECO:0000314"/>
    <property type="project" value="UniProtKB"/>
</dbReference>
<dbReference type="GO" id="GO:0033116">
    <property type="term" value="C:endoplasmic reticulum-Golgi intermediate compartment membrane"/>
    <property type="evidence" value="ECO:0000304"/>
    <property type="project" value="Reactome"/>
</dbReference>
<dbReference type="GO" id="GO:0000139">
    <property type="term" value="C:Golgi membrane"/>
    <property type="evidence" value="ECO:0000314"/>
    <property type="project" value="UniProtKB"/>
</dbReference>
<dbReference type="GO" id="GO:0031965">
    <property type="term" value="C:nuclear membrane"/>
    <property type="evidence" value="ECO:0000314"/>
    <property type="project" value="UniProtKB"/>
</dbReference>
<dbReference type="GO" id="GO:0005096">
    <property type="term" value="F:GTPase activator activity"/>
    <property type="evidence" value="ECO:0000314"/>
    <property type="project" value="UniProtKB"/>
</dbReference>
<dbReference type="GO" id="GO:0031267">
    <property type="term" value="F:small GTPase binding"/>
    <property type="evidence" value="ECO:0000353"/>
    <property type="project" value="UniProtKB"/>
</dbReference>
<dbReference type="GO" id="GO:0001675">
    <property type="term" value="P:acrosome assembly"/>
    <property type="evidence" value="ECO:0007669"/>
    <property type="project" value="Ensembl"/>
</dbReference>
<dbReference type="GO" id="GO:0090110">
    <property type="term" value="P:COPII-coated vesicle cargo loading"/>
    <property type="evidence" value="ECO:0000315"/>
    <property type="project" value="UniProtKB"/>
</dbReference>
<dbReference type="GO" id="GO:0006888">
    <property type="term" value="P:endoplasmic reticulum to Golgi vesicle-mediated transport"/>
    <property type="evidence" value="ECO:0000315"/>
    <property type="project" value="UniProtKB"/>
</dbReference>
<dbReference type="GO" id="GO:0007030">
    <property type="term" value="P:Golgi organization"/>
    <property type="evidence" value="ECO:0000315"/>
    <property type="project" value="UniProtKB"/>
</dbReference>
<dbReference type="GO" id="GO:0070309">
    <property type="term" value="P:lens fiber cell morphogenesis"/>
    <property type="evidence" value="ECO:0007669"/>
    <property type="project" value="Ensembl"/>
</dbReference>
<dbReference type="GO" id="GO:0034389">
    <property type="term" value="P:lipid droplet organization"/>
    <property type="evidence" value="ECO:0007669"/>
    <property type="project" value="Ensembl"/>
</dbReference>
<dbReference type="GO" id="GO:0044829">
    <property type="term" value="P:positive regulation by host of viral genome replication"/>
    <property type="evidence" value="ECO:0000315"/>
    <property type="project" value="AgBase"/>
</dbReference>
<dbReference type="GO" id="GO:0046726">
    <property type="term" value="P:positive regulation by virus of viral protein levels in host cell"/>
    <property type="evidence" value="ECO:0000315"/>
    <property type="project" value="AgBase"/>
</dbReference>
<dbReference type="GO" id="GO:1902953">
    <property type="term" value="P:positive regulation of ER to Golgi vesicle-mediated transport"/>
    <property type="evidence" value="ECO:0000315"/>
    <property type="project" value="UniProtKB"/>
</dbReference>
<dbReference type="GO" id="GO:0043547">
    <property type="term" value="P:positive regulation of GTPase activity"/>
    <property type="evidence" value="ECO:0000315"/>
    <property type="project" value="UniProtKB"/>
</dbReference>
<dbReference type="GO" id="GO:0072520">
    <property type="term" value="P:seminiferous tubule development"/>
    <property type="evidence" value="ECO:0007669"/>
    <property type="project" value="Ensembl"/>
</dbReference>
<dbReference type="GO" id="GO:0019068">
    <property type="term" value="P:virion assembly"/>
    <property type="evidence" value="ECO:0000315"/>
    <property type="project" value="UniProtKB"/>
</dbReference>
<dbReference type="FunFam" id="1.10.472.80:FF:000024">
    <property type="entry name" value="TBC1 domain family member 20"/>
    <property type="match status" value="1"/>
</dbReference>
<dbReference type="FunFam" id="1.10.8.1310:FF:000001">
    <property type="entry name" value="TBC1 domain family, member 20"/>
    <property type="match status" value="1"/>
</dbReference>
<dbReference type="Gene3D" id="1.10.8.1310">
    <property type="match status" value="1"/>
</dbReference>
<dbReference type="Gene3D" id="1.10.472.80">
    <property type="entry name" value="Ypt/Rab-GAP domain of gyp1p, domain 3"/>
    <property type="match status" value="1"/>
</dbReference>
<dbReference type="InterPro" id="IPR000195">
    <property type="entry name" value="Rab-GAP-TBC_dom"/>
</dbReference>
<dbReference type="InterPro" id="IPR035969">
    <property type="entry name" value="Rab-GAP_TBC_sf"/>
</dbReference>
<dbReference type="InterPro" id="IPR045913">
    <property type="entry name" value="TBC20/Gyp8-like"/>
</dbReference>
<dbReference type="PANTHER" id="PTHR20913:SF10">
    <property type="entry name" value="TBC1 DOMAIN FAMILY MEMBER 20"/>
    <property type="match status" value="1"/>
</dbReference>
<dbReference type="PANTHER" id="PTHR20913">
    <property type="entry name" value="TBC1 DOMAIN FAMILY MEMBER 20/GTPASE"/>
    <property type="match status" value="1"/>
</dbReference>
<dbReference type="Pfam" id="PF00566">
    <property type="entry name" value="RabGAP-TBC"/>
    <property type="match status" value="1"/>
</dbReference>
<dbReference type="SMART" id="SM00164">
    <property type="entry name" value="TBC"/>
    <property type="match status" value="1"/>
</dbReference>
<dbReference type="SUPFAM" id="SSF47923">
    <property type="entry name" value="Ypt/Rab-GAP domain of gyp1p"/>
    <property type="match status" value="2"/>
</dbReference>
<dbReference type="PROSITE" id="PS50086">
    <property type="entry name" value="TBC_RABGAP"/>
    <property type="match status" value="1"/>
</dbReference>